<feature type="chain" id="PRO_0000097130" description="Quinoline 2-oxidoreductase beta chain">
    <location>
        <begin position="1"/>
        <end position="10" status="greater than"/>
    </location>
</feature>
<feature type="non-terminal residue">
    <location>
        <position position="10"/>
    </location>
</feature>
<accession>P80465</accession>
<sequence length="10" mass="1242">MKFPAFAYXR</sequence>
<evidence type="ECO:0000269" key="1">
    <source>
    </source>
</evidence>
<evidence type="ECO:0000305" key="2"/>
<keyword id="KW-0903">Direct protein sequencing</keyword>
<keyword id="KW-0274">FAD</keyword>
<keyword id="KW-0285">Flavoprotein</keyword>
<keyword id="KW-0560">Oxidoreductase</keyword>
<protein>
    <recommendedName>
        <fullName>Quinoline 2-oxidoreductase beta chain</fullName>
        <ecNumber evidence="1">1.3.99.17</ecNumber>
    </recommendedName>
</protein>
<organism>
    <name type="scientific">Comamonas testosteroni</name>
    <name type="common">Pseudomonas testosteroni</name>
    <dbReference type="NCBI Taxonomy" id="285"/>
    <lineage>
        <taxon>Bacteria</taxon>
        <taxon>Pseudomonadati</taxon>
        <taxon>Pseudomonadota</taxon>
        <taxon>Betaproteobacteria</taxon>
        <taxon>Burkholderiales</taxon>
        <taxon>Comamonadaceae</taxon>
        <taxon>Comamonas</taxon>
    </lineage>
</organism>
<name>Q2OB_COMTE</name>
<proteinExistence type="evidence at protein level"/>
<dbReference type="EC" id="1.3.99.17" evidence="1"/>
<dbReference type="UniPathway" id="UPA00239"/>
<dbReference type="GO" id="GO:0018523">
    <property type="term" value="F:quinoline 2-oxidoreductase activity"/>
    <property type="evidence" value="ECO:0007669"/>
    <property type="project" value="UniProtKB-EC"/>
</dbReference>
<comment type="function">
    <text evidence="1">Converts (3-methyl-)-quinoline to (3-methyl-)2-oxo-1,2-dihydroquinoline.</text>
</comment>
<comment type="catalytic activity">
    <reaction evidence="1">
        <text>quinoline + A + H2O = quinolin-2(1H)-one + AH2</text>
        <dbReference type="Rhea" id="RHEA:17749"/>
        <dbReference type="ChEBI" id="CHEBI:13193"/>
        <dbReference type="ChEBI" id="CHEBI:15377"/>
        <dbReference type="ChEBI" id="CHEBI:17362"/>
        <dbReference type="ChEBI" id="CHEBI:17499"/>
        <dbReference type="ChEBI" id="CHEBI:18289"/>
        <dbReference type="EC" id="1.3.99.17"/>
    </reaction>
</comment>
<comment type="cofactor">
    <cofactor evidence="1">
        <name>FAD</name>
        <dbReference type="ChEBI" id="CHEBI:57692"/>
    </cofactor>
    <text evidence="1">Binds 1 FAD per subunit.</text>
</comment>
<comment type="pathway">
    <text>Xenobiotic degradation; quinoline degradation.</text>
</comment>
<comment type="subunit">
    <text evidence="2">Heterohexamer of two alpha chains, two beta chains, and two gamma chains.</text>
</comment>
<reference key="1">
    <citation type="journal article" date="1995" name="Eur. J. Biochem.">
        <title>Quinoline 2-oxidoreductase and 2-oxo-1,2-dihydroquinoline 5,6-dioxygenase from Comamonas testosteroni 63. The first two enzymes in quinoline and 3-methylquinoline degradation.</title>
        <authorList>
            <person name="Schach S."/>
            <person name="Tshisuaka B."/>
            <person name="Fetzner S."/>
            <person name="Lingens F."/>
        </authorList>
    </citation>
    <scope>PROTEIN SEQUENCE</scope>
    <scope>FUNCTION</scope>
    <scope>CATALYTIC ACTIVITY</scope>
    <scope>COFACTOR</scope>
    <source>
        <strain>63</strain>
    </source>
</reference>